<reference key="1">
    <citation type="journal article" date="2009" name="PLoS ONE">
        <title>Genome sequence of the versatile fish pathogen Edwardsiella tarda provides insights into its adaptation to broad host ranges and intracellular niches.</title>
        <authorList>
            <person name="Wang Q."/>
            <person name="Yang M."/>
            <person name="Xiao J."/>
            <person name="Wu H."/>
            <person name="Wang X."/>
            <person name="Lv Y."/>
            <person name="Xu L."/>
            <person name="Zheng H."/>
            <person name="Wang S."/>
            <person name="Zhao G."/>
            <person name="Liu Q."/>
            <person name="Zhang Y."/>
        </authorList>
    </citation>
    <scope>NUCLEOTIDE SEQUENCE [LARGE SCALE GENOMIC DNA]</scope>
    <source>
        <strain>EIB202 / CCTCC M208068</strain>
    </source>
</reference>
<keyword id="KW-0997">Cell inner membrane</keyword>
<keyword id="KW-1003">Cell membrane</keyword>
<keyword id="KW-0472">Membrane</keyword>
<keyword id="KW-0571">Peptide transport</keyword>
<keyword id="KW-0653">Protein transport</keyword>
<keyword id="KW-1185">Reference proteome</keyword>
<keyword id="KW-0812">Transmembrane</keyword>
<keyword id="KW-1133">Transmembrane helix</keyword>
<keyword id="KW-0813">Transport</keyword>
<evidence type="ECO:0000255" key="1">
    <source>
        <dbReference type="HAMAP-Rule" id="MF_01879"/>
    </source>
</evidence>
<proteinExistence type="inferred from homology"/>
<feature type="chain" id="PRO_0000395184" description="Dipeptide and tripeptide permease B">
    <location>
        <begin position="1"/>
        <end position="491"/>
    </location>
</feature>
<feature type="topological domain" description="Cytoplasmic" evidence="1">
    <location>
        <begin position="1"/>
        <end position="26"/>
    </location>
</feature>
<feature type="transmembrane region" description="Helical" evidence="1">
    <location>
        <begin position="27"/>
        <end position="47"/>
    </location>
</feature>
<feature type="topological domain" description="Periplasmic" evidence="1">
    <location>
        <begin position="48"/>
        <end position="51"/>
    </location>
</feature>
<feature type="transmembrane region" description="Helical" evidence="1">
    <location>
        <begin position="52"/>
        <end position="72"/>
    </location>
</feature>
<feature type="topological domain" description="Cytoplasmic" evidence="1">
    <location>
        <begin position="73"/>
        <end position="81"/>
    </location>
</feature>
<feature type="transmembrane region" description="Helical" evidence="1">
    <location>
        <begin position="82"/>
        <end position="102"/>
    </location>
</feature>
<feature type="topological domain" description="Periplasmic" evidence="1">
    <location>
        <begin position="103"/>
        <end position="105"/>
    </location>
</feature>
<feature type="transmembrane region" description="Helical" evidence="1">
    <location>
        <begin position="106"/>
        <end position="126"/>
    </location>
</feature>
<feature type="topological domain" description="Cytoplasmic" evidence="1">
    <location>
        <begin position="127"/>
        <end position="145"/>
    </location>
</feature>
<feature type="transmembrane region" description="Helical" evidence="1">
    <location>
        <begin position="146"/>
        <end position="166"/>
    </location>
</feature>
<feature type="topological domain" description="Periplasmic" evidence="1">
    <location>
        <begin position="167"/>
        <end position="171"/>
    </location>
</feature>
<feature type="transmembrane region" description="Helical" evidence="1">
    <location>
        <begin position="172"/>
        <end position="192"/>
    </location>
</feature>
<feature type="topological domain" description="Cytoplasmic" evidence="1">
    <location>
        <begin position="193"/>
        <end position="210"/>
    </location>
</feature>
<feature type="transmembrane region" description="Helical" evidence="1">
    <location>
        <begin position="211"/>
        <end position="231"/>
    </location>
</feature>
<feature type="topological domain" description="Periplasmic" evidence="1">
    <location>
        <position position="232"/>
    </location>
</feature>
<feature type="transmembrane region" description="Helical" evidence="1">
    <location>
        <begin position="233"/>
        <end position="253"/>
    </location>
</feature>
<feature type="topological domain" description="Cytoplasmic" evidence="1">
    <location>
        <begin position="254"/>
        <end position="266"/>
    </location>
</feature>
<feature type="transmembrane region" description="Helical" evidence="1">
    <location>
        <begin position="267"/>
        <end position="287"/>
    </location>
</feature>
<feature type="topological domain" description="Periplasmic" evidence="1">
    <location>
        <begin position="288"/>
        <end position="312"/>
    </location>
</feature>
<feature type="transmembrane region" description="Helical" evidence="1">
    <location>
        <begin position="313"/>
        <end position="335"/>
    </location>
</feature>
<feature type="topological domain" description="Cytoplasmic" evidence="1">
    <location>
        <begin position="336"/>
        <end position="349"/>
    </location>
</feature>
<feature type="transmembrane region" description="Helical" evidence="1">
    <location>
        <begin position="350"/>
        <end position="370"/>
    </location>
</feature>
<feature type="topological domain" description="Periplasmic" evidence="1">
    <location>
        <begin position="371"/>
        <end position="378"/>
    </location>
</feature>
<feature type="transmembrane region" description="Helical" evidence="1">
    <location>
        <begin position="379"/>
        <end position="399"/>
    </location>
</feature>
<feature type="topological domain" description="Cytoplasmic" evidence="1">
    <location>
        <begin position="400"/>
        <end position="423"/>
    </location>
</feature>
<feature type="transmembrane region" description="Helical" evidence="1">
    <location>
        <begin position="424"/>
        <end position="444"/>
    </location>
</feature>
<feature type="topological domain" description="Periplasmic" evidence="1">
    <location>
        <begin position="445"/>
        <end position="454"/>
    </location>
</feature>
<feature type="transmembrane region" description="Helical" evidence="1">
    <location>
        <begin position="455"/>
        <end position="475"/>
    </location>
</feature>
<feature type="topological domain" description="Cytoplasmic" evidence="1">
    <location>
        <begin position="476"/>
        <end position="491"/>
    </location>
</feature>
<dbReference type="EMBL" id="CP001135">
    <property type="protein sequence ID" value="ACY86183.1"/>
    <property type="molecule type" value="Genomic_DNA"/>
</dbReference>
<dbReference type="RefSeq" id="WP_012850149.1">
    <property type="nucleotide sequence ID" value="NZ_MPNU01000001.1"/>
</dbReference>
<dbReference type="SMR" id="D0ZGL2"/>
<dbReference type="GeneID" id="72530119"/>
<dbReference type="KEGG" id="etr:ETAE_3352"/>
<dbReference type="HOGENOM" id="CLU_004790_0_0_6"/>
<dbReference type="OrthoDB" id="9772725at2"/>
<dbReference type="Proteomes" id="UP000002634">
    <property type="component" value="Chromosome"/>
</dbReference>
<dbReference type="GO" id="GO:0005886">
    <property type="term" value="C:plasma membrane"/>
    <property type="evidence" value="ECO:0007669"/>
    <property type="project" value="UniProtKB-SubCell"/>
</dbReference>
<dbReference type="GO" id="GO:0071916">
    <property type="term" value="F:dipeptide transmembrane transporter activity"/>
    <property type="evidence" value="ECO:0007669"/>
    <property type="project" value="UniProtKB-UniRule"/>
</dbReference>
<dbReference type="GO" id="GO:0015333">
    <property type="term" value="F:peptide:proton symporter activity"/>
    <property type="evidence" value="ECO:0007669"/>
    <property type="project" value="UniProtKB-UniRule"/>
</dbReference>
<dbReference type="GO" id="GO:0042937">
    <property type="term" value="F:tripeptide transmembrane transporter activity"/>
    <property type="evidence" value="ECO:0007669"/>
    <property type="project" value="UniProtKB-UniRule"/>
</dbReference>
<dbReference type="GO" id="GO:0015031">
    <property type="term" value="P:protein transport"/>
    <property type="evidence" value="ECO:0007669"/>
    <property type="project" value="UniProtKB-KW"/>
</dbReference>
<dbReference type="CDD" id="cd17346">
    <property type="entry name" value="MFS_DtpA_like"/>
    <property type="match status" value="1"/>
</dbReference>
<dbReference type="FunFam" id="1.20.1250.20:FF:000017">
    <property type="entry name" value="Dipeptide and tripeptide permease A"/>
    <property type="match status" value="1"/>
</dbReference>
<dbReference type="Gene3D" id="1.20.1250.20">
    <property type="entry name" value="MFS general substrate transporter like domains"/>
    <property type="match status" value="1"/>
</dbReference>
<dbReference type="HAMAP" id="MF_01879">
    <property type="entry name" value="PTR2_DtpB_subfam"/>
    <property type="match status" value="1"/>
</dbReference>
<dbReference type="InterPro" id="IPR023778">
    <property type="entry name" value="AA/pep_transptr_DtpB"/>
</dbReference>
<dbReference type="InterPro" id="IPR005279">
    <property type="entry name" value="Dipep/tripep_permease"/>
</dbReference>
<dbReference type="InterPro" id="IPR036259">
    <property type="entry name" value="MFS_trans_sf"/>
</dbReference>
<dbReference type="InterPro" id="IPR050171">
    <property type="entry name" value="MFS_Transporters"/>
</dbReference>
<dbReference type="InterPro" id="IPR000109">
    <property type="entry name" value="POT_fam"/>
</dbReference>
<dbReference type="InterPro" id="IPR018456">
    <property type="entry name" value="PTR2_symporter_CS"/>
</dbReference>
<dbReference type="NCBIfam" id="NF007575">
    <property type="entry name" value="PRK10207.1"/>
    <property type="match status" value="1"/>
</dbReference>
<dbReference type="NCBIfam" id="TIGR00924">
    <property type="entry name" value="yjdL_sub1_fam"/>
    <property type="match status" value="1"/>
</dbReference>
<dbReference type="PANTHER" id="PTHR23517:SF15">
    <property type="entry name" value="PROTON-DEPENDENT OLIGOPEPTIDE FAMILY TRANSPORT PROTEIN"/>
    <property type="match status" value="1"/>
</dbReference>
<dbReference type="PANTHER" id="PTHR23517">
    <property type="entry name" value="RESISTANCE PROTEIN MDTM, PUTATIVE-RELATED-RELATED"/>
    <property type="match status" value="1"/>
</dbReference>
<dbReference type="Pfam" id="PF00854">
    <property type="entry name" value="PTR2"/>
    <property type="match status" value="1"/>
</dbReference>
<dbReference type="SUPFAM" id="SSF103473">
    <property type="entry name" value="MFS general substrate transporter"/>
    <property type="match status" value="1"/>
</dbReference>
<dbReference type="PROSITE" id="PS01023">
    <property type="entry name" value="PTR2_2"/>
    <property type="match status" value="1"/>
</dbReference>
<sequence length="491" mass="53531">MNNTAPGLLHQPKPFFMIFFVELWERFGYYGVQGILAVFFVKQLGFSQEQAFITFGAFAALVYGLISIGGYVGDHLLGTKRTMVLGAIVLALGYFMTGMSLLKPEMIFIALGTIAVGNGLFKANPASLLSKCYPPKDPRLDGAFTLFYMSINIGSLLSLSLAPIIAERFGYAVTYNLCGLGLIIALLVYFACRGMVRSIGSAPDHQPLNYGKLLLVLAGAVVMIFLCAWLMHNVGVANIVLIAVSAVVLYFFFREAFKQDKTGRNRMFVAFILMIEAVLFYILYAQMPTSLNFFAINNVRHELLGFAINPVSFQALNPFWVVVASPILASIYTRLGSRGRDMTMPTKFTLGMLLCSLGFLTAAAAGMWFADAQGLTSPWFVVLVYLFQSLGELMISALGLAMVAALVPQYLMGFILGMWFLTQAAAFLLGGYVATFTAVPAGIHDPLQTLPIYTGVFGKIGIATLIVTLVMAAMVPWLNRMMNTPADGQKA</sequence>
<gene>
    <name evidence="1" type="primary">dtpB</name>
    <name type="ordered locus">ETAE_3352</name>
</gene>
<accession>D0ZGL2</accession>
<name>DTPB_EDWPI</name>
<organism>
    <name type="scientific">Edwardsiella piscicida</name>
    <dbReference type="NCBI Taxonomy" id="1263550"/>
    <lineage>
        <taxon>Bacteria</taxon>
        <taxon>Pseudomonadati</taxon>
        <taxon>Pseudomonadota</taxon>
        <taxon>Gammaproteobacteria</taxon>
        <taxon>Enterobacterales</taxon>
        <taxon>Hafniaceae</taxon>
        <taxon>Edwardsiella</taxon>
    </lineage>
</organism>
<protein>
    <recommendedName>
        <fullName evidence="1">Dipeptide and tripeptide permease B</fullName>
    </recommendedName>
</protein>
<comment type="function">
    <text evidence="1">Proton-dependent permease that transports di- and tripeptides.</text>
</comment>
<comment type="subcellular location">
    <subcellularLocation>
        <location evidence="1">Cell inner membrane</location>
        <topology evidence="1">Multi-pass membrane protein</topology>
    </subcellularLocation>
</comment>
<comment type="similarity">
    <text evidence="1">Belongs to the major facilitator superfamily. Proton-dependent oligopeptide transporter (POT/PTR) (TC 2.A.17) family. DtpB subfamily.</text>
</comment>